<sequence>MAGHSKFKNIMHRKGRADAARSKLFSKLSREITVAAKSGVPDPNMNPRLRLAVNNAKAESLPKDVIDRAIKKSQMGDAADYSEIRYEGVAAGGVGIIVEVLTDNKNRAAANVRSYFTKMGGNMGATNSVAFNYDRVGQVSYPAKAASEDDMMEAAIEAGADDVVSDMDEEGEGHIVYTAFESLNEVAAALEAKFGPASNTKIAWRPKMQVPVTGDAVATLMKLLDALNDDDDVQAVYSNEEISDEDVAKLG</sequence>
<reference key="1">
    <citation type="submission" date="2008-01" db="EMBL/GenBank/DDBJ databases">
        <title>Complete sequence of chromosome of Caulobacter sp. K31.</title>
        <authorList>
            <consortium name="US DOE Joint Genome Institute"/>
            <person name="Copeland A."/>
            <person name="Lucas S."/>
            <person name="Lapidus A."/>
            <person name="Barry K."/>
            <person name="Glavina del Rio T."/>
            <person name="Dalin E."/>
            <person name="Tice H."/>
            <person name="Pitluck S."/>
            <person name="Bruce D."/>
            <person name="Goodwin L."/>
            <person name="Thompson L.S."/>
            <person name="Brettin T."/>
            <person name="Detter J.C."/>
            <person name="Han C."/>
            <person name="Schmutz J."/>
            <person name="Larimer F."/>
            <person name="Land M."/>
            <person name="Hauser L."/>
            <person name="Kyrpides N."/>
            <person name="Kim E."/>
            <person name="Stephens C."/>
            <person name="Richardson P."/>
        </authorList>
    </citation>
    <scope>NUCLEOTIDE SEQUENCE [LARGE SCALE GENOMIC DNA]</scope>
    <source>
        <strain>K31</strain>
    </source>
</reference>
<feature type="chain" id="PRO_1000083146" description="Probable transcriptional regulatory protein Caul_0780">
    <location>
        <begin position="1"/>
        <end position="251"/>
    </location>
</feature>
<gene>
    <name type="ordered locus">Caul_0780</name>
</gene>
<proteinExistence type="inferred from homology"/>
<dbReference type="EMBL" id="CP000927">
    <property type="protein sequence ID" value="ABZ69911.1"/>
    <property type="molecule type" value="Genomic_DNA"/>
</dbReference>
<dbReference type="SMR" id="B0SUN3"/>
<dbReference type="STRING" id="366602.Caul_0780"/>
<dbReference type="KEGG" id="cak:Caul_0780"/>
<dbReference type="eggNOG" id="COG0217">
    <property type="taxonomic scope" value="Bacteria"/>
</dbReference>
<dbReference type="HOGENOM" id="CLU_062974_3_0_5"/>
<dbReference type="OrthoDB" id="9781053at2"/>
<dbReference type="GO" id="GO:0005829">
    <property type="term" value="C:cytosol"/>
    <property type="evidence" value="ECO:0007669"/>
    <property type="project" value="TreeGrafter"/>
</dbReference>
<dbReference type="GO" id="GO:0003677">
    <property type="term" value="F:DNA binding"/>
    <property type="evidence" value="ECO:0007669"/>
    <property type="project" value="UniProtKB-UniRule"/>
</dbReference>
<dbReference type="GO" id="GO:0006355">
    <property type="term" value="P:regulation of DNA-templated transcription"/>
    <property type="evidence" value="ECO:0007669"/>
    <property type="project" value="UniProtKB-UniRule"/>
</dbReference>
<dbReference type="FunFam" id="1.10.10.200:FF:000002">
    <property type="entry name" value="Probable transcriptional regulatory protein CLM62_37755"/>
    <property type="match status" value="1"/>
</dbReference>
<dbReference type="Gene3D" id="1.10.10.200">
    <property type="match status" value="1"/>
</dbReference>
<dbReference type="Gene3D" id="3.30.70.980">
    <property type="match status" value="2"/>
</dbReference>
<dbReference type="HAMAP" id="MF_00693">
    <property type="entry name" value="Transcrip_reg_TACO1"/>
    <property type="match status" value="1"/>
</dbReference>
<dbReference type="InterPro" id="IPR017856">
    <property type="entry name" value="Integrase-like_N"/>
</dbReference>
<dbReference type="InterPro" id="IPR048300">
    <property type="entry name" value="TACO1_YebC-like_2nd/3rd_dom"/>
</dbReference>
<dbReference type="InterPro" id="IPR049083">
    <property type="entry name" value="TACO1_YebC_N"/>
</dbReference>
<dbReference type="InterPro" id="IPR002876">
    <property type="entry name" value="Transcrip_reg_TACO1-like"/>
</dbReference>
<dbReference type="InterPro" id="IPR026564">
    <property type="entry name" value="Transcrip_reg_TACO1-like_dom3"/>
</dbReference>
<dbReference type="InterPro" id="IPR029072">
    <property type="entry name" value="YebC-like"/>
</dbReference>
<dbReference type="NCBIfam" id="NF001030">
    <property type="entry name" value="PRK00110.1"/>
    <property type="match status" value="1"/>
</dbReference>
<dbReference type="NCBIfam" id="NF009044">
    <property type="entry name" value="PRK12378.1"/>
    <property type="match status" value="1"/>
</dbReference>
<dbReference type="NCBIfam" id="TIGR01033">
    <property type="entry name" value="YebC/PmpR family DNA-binding transcriptional regulator"/>
    <property type="match status" value="1"/>
</dbReference>
<dbReference type="PANTHER" id="PTHR12532:SF6">
    <property type="entry name" value="TRANSCRIPTIONAL REGULATORY PROTEIN YEBC-RELATED"/>
    <property type="match status" value="1"/>
</dbReference>
<dbReference type="PANTHER" id="PTHR12532">
    <property type="entry name" value="TRANSLATIONAL ACTIVATOR OF CYTOCHROME C OXIDASE 1"/>
    <property type="match status" value="1"/>
</dbReference>
<dbReference type="Pfam" id="PF20772">
    <property type="entry name" value="TACO1_YebC_N"/>
    <property type="match status" value="1"/>
</dbReference>
<dbReference type="Pfam" id="PF01709">
    <property type="entry name" value="Transcrip_reg"/>
    <property type="match status" value="1"/>
</dbReference>
<dbReference type="SUPFAM" id="SSF75625">
    <property type="entry name" value="YebC-like"/>
    <property type="match status" value="1"/>
</dbReference>
<accession>B0SUN3</accession>
<name>Y780_CAUSK</name>
<comment type="subcellular location">
    <subcellularLocation>
        <location evidence="1">Cytoplasm</location>
    </subcellularLocation>
</comment>
<comment type="similarity">
    <text evidence="1">Belongs to the TACO1 family.</text>
</comment>
<protein>
    <recommendedName>
        <fullName evidence="1">Probable transcriptional regulatory protein Caul_0780</fullName>
    </recommendedName>
</protein>
<evidence type="ECO:0000255" key="1">
    <source>
        <dbReference type="HAMAP-Rule" id="MF_00693"/>
    </source>
</evidence>
<keyword id="KW-0963">Cytoplasm</keyword>
<keyword id="KW-0238">DNA-binding</keyword>
<keyword id="KW-0804">Transcription</keyword>
<keyword id="KW-0805">Transcription regulation</keyword>
<organism>
    <name type="scientific">Caulobacter sp. (strain K31)</name>
    <dbReference type="NCBI Taxonomy" id="366602"/>
    <lineage>
        <taxon>Bacteria</taxon>
        <taxon>Pseudomonadati</taxon>
        <taxon>Pseudomonadota</taxon>
        <taxon>Alphaproteobacteria</taxon>
        <taxon>Caulobacterales</taxon>
        <taxon>Caulobacteraceae</taxon>
        <taxon>Caulobacter</taxon>
    </lineage>
</organism>